<gene>
    <name evidence="1" type="primary">minC</name>
    <name type="ordered locus">VS_0883</name>
</gene>
<protein>
    <recommendedName>
        <fullName evidence="1">Probable septum site-determining protein MinC</fullName>
    </recommendedName>
</protein>
<dbReference type="EMBL" id="FM954972">
    <property type="protein sequence ID" value="CAV17890.1"/>
    <property type="molecule type" value="Genomic_DNA"/>
</dbReference>
<dbReference type="SMR" id="B7VL65"/>
<dbReference type="STRING" id="575788.VS_0883"/>
<dbReference type="KEGG" id="vsp:VS_0883"/>
<dbReference type="PATRIC" id="fig|575788.5.peg.2210"/>
<dbReference type="eggNOG" id="COG0850">
    <property type="taxonomic scope" value="Bacteria"/>
</dbReference>
<dbReference type="HOGENOM" id="CLU_067812_0_1_6"/>
<dbReference type="Proteomes" id="UP000009100">
    <property type="component" value="Chromosome 1"/>
</dbReference>
<dbReference type="GO" id="GO:0000902">
    <property type="term" value="P:cell morphogenesis"/>
    <property type="evidence" value="ECO:0007669"/>
    <property type="project" value="InterPro"/>
</dbReference>
<dbReference type="GO" id="GO:0000917">
    <property type="term" value="P:division septum assembly"/>
    <property type="evidence" value="ECO:0007669"/>
    <property type="project" value="UniProtKB-KW"/>
</dbReference>
<dbReference type="GO" id="GO:0051302">
    <property type="term" value="P:regulation of cell division"/>
    <property type="evidence" value="ECO:0007669"/>
    <property type="project" value="InterPro"/>
</dbReference>
<dbReference type="GO" id="GO:1901891">
    <property type="term" value="P:regulation of cell septum assembly"/>
    <property type="evidence" value="ECO:0007669"/>
    <property type="project" value="InterPro"/>
</dbReference>
<dbReference type="Gene3D" id="2.160.20.70">
    <property type="match status" value="1"/>
</dbReference>
<dbReference type="Gene3D" id="3.30.70.260">
    <property type="match status" value="1"/>
</dbReference>
<dbReference type="HAMAP" id="MF_00267">
    <property type="entry name" value="MinC"/>
    <property type="match status" value="1"/>
</dbReference>
<dbReference type="InterPro" id="IPR016098">
    <property type="entry name" value="CAP/MinC_C"/>
</dbReference>
<dbReference type="InterPro" id="IPR013033">
    <property type="entry name" value="MinC"/>
</dbReference>
<dbReference type="InterPro" id="IPR036145">
    <property type="entry name" value="MinC_C_sf"/>
</dbReference>
<dbReference type="InterPro" id="IPR007874">
    <property type="entry name" value="MinC_N"/>
</dbReference>
<dbReference type="InterPro" id="IPR005526">
    <property type="entry name" value="Septum_form_inhib_MinC_C"/>
</dbReference>
<dbReference type="NCBIfam" id="TIGR01222">
    <property type="entry name" value="minC"/>
    <property type="match status" value="1"/>
</dbReference>
<dbReference type="PANTHER" id="PTHR34108">
    <property type="entry name" value="SEPTUM SITE-DETERMINING PROTEIN MINC"/>
    <property type="match status" value="1"/>
</dbReference>
<dbReference type="PANTHER" id="PTHR34108:SF1">
    <property type="entry name" value="SEPTUM SITE-DETERMINING PROTEIN MINC"/>
    <property type="match status" value="1"/>
</dbReference>
<dbReference type="Pfam" id="PF03775">
    <property type="entry name" value="MinC_C"/>
    <property type="match status" value="1"/>
</dbReference>
<dbReference type="Pfam" id="PF05209">
    <property type="entry name" value="MinC_N"/>
    <property type="match status" value="1"/>
</dbReference>
<dbReference type="SUPFAM" id="SSF63848">
    <property type="entry name" value="Cell-division inhibitor MinC, C-terminal domain"/>
    <property type="match status" value="1"/>
</dbReference>
<feature type="chain" id="PRO_1000191262" description="Probable septum site-determining protein MinC">
    <location>
        <begin position="1"/>
        <end position="220"/>
    </location>
</feature>
<sequence>MSSNPDLKGSSFTLSVLHLSDDQVENAVSFLQEKVNQAPTFFAAAPVVINISKVAGDIDFLQLKEGISQAGMIPVGVAGCSDKRMQNLAKEAGFAVMTASKSPSQAPAKMAPIKVVRTPIRSGQQVYAKDGDLLILSHVSAGAEVIADGSIHIHGTLRGRAIAGASGQTEAKIICNDLQAELVSIAGNYWLSDQIESEYWQKKTMFSMANDVLHVDVLAI</sequence>
<evidence type="ECO:0000255" key="1">
    <source>
        <dbReference type="HAMAP-Rule" id="MF_00267"/>
    </source>
</evidence>
<proteinExistence type="inferred from homology"/>
<accession>B7VL65</accession>
<name>MINC_VIBA3</name>
<keyword id="KW-0131">Cell cycle</keyword>
<keyword id="KW-0132">Cell division</keyword>
<keyword id="KW-0717">Septation</keyword>
<organism>
    <name type="scientific">Vibrio atlanticus (strain LGP32)</name>
    <name type="common">Vibrio splendidus (strain Mel32)</name>
    <dbReference type="NCBI Taxonomy" id="575788"/>
    <lineage>
        <taxon>Bacteria</taxon>
        <taxon>Pseudomonadati</taxon>
        <taxon>Pseudomonadota</taxon>
        <taxon>Gammaproteobacteria</taxon>
        <taxon>Vibrionales</taxon>
        <taxon>Vibrionaceae</taxon>
        <taxon>Vibrio</taxon>
    </lineage>
</organism>
<comment type="function">
    <text evidence="1">Cell division inhibitor that blocks the formation of polar Z ring septums. Rapidly oscillates between the poles of the cell to destabilize FtsZ filaments that have formed before they mature into polar Z rings. Prevents FtsZ polymerization.</text>
</comment>
<comment type="subunit">
    <text evidence="1">Interacts with MinD and FtsZ.</text>
</comment>
<comment type="similarity">
    <text evidence="1">Belongs to the MinC family.</text>
</comment>
<reference key="1">
    <citation type="submission" date="2009-02" db="EMBL/GenBank/DDBJ databases">
        <title>Vibrio splendidus str. LGP32 complete genome.</title>
        <authorList>
            <person name="Mazel D."/>
            <person name="Le Roux F."/>
        </authorList>
    </citation>
    <scope>NUCLEOTIDE SEQUENCE [LARGE SCALE GENOMIC DNA]</scope>
    <source>
        <strain>LGP32</strain>
    </source>
</reference>